<evidence type="ECO:0000250" key="1"/>
<evidence type="ECO:0000250" key="2">
    <source>
        <dbReference type="UniProtKB" id="Q9QZ59"/>
    </source>
</evidence>
<evidence type="ECO:0000255" key="3">
    <source>
        <dbReference type="PROSITE-ProRule" id="PRU00070"/>
    </source>
</evidence>
<evidence type="ECO:0000256" key="4">
    <source>
        <dbReference type="SAM" id="MobiDB-lite"/>
    </source>
</evidence>
<evidence type="ECO:0000305" key="5"/>
<gene>
    <name type="primary">DMRT1</name>
</gene>
<proteinExistence type="evidence at transcript level"/>
<dbReference type="EMBL" id="FJ790227">
    <property type="protein sequence ID" value="ACN86339.1"/>
    <property type="molecule type" value="mRNA"/>
</dbReference>
<dbReference type="EMBL" id="DAAA02022773">
    <property type="status" value="NOT_ANNOTATED_CDS"/>
    <property type="molecule type" value="Genomic_DNA"/>
</dbReference>
<dbReference type="EMBL" id="DAAA02022774">
    <property type="status" value="NOT_ANNOTATED_CDS"/>
    <property type="molecule type" value="Genomic_DNA"/>
</dbReference>
<dbReference type="EMBL" id="DAAA02022775">
    <property type="status" value="NOT_ANNOTATED_CDS"/>
    <property type="molecule type" value="Genomic_DNA"/>
</dbReference>
<dbReference type="EMBL" id="DAAA02022776">
    <property type="status" value="NOT_ANNOTATED_CDS"/>
    <property type="molecule type" value="Genomic_DNA"/>
</dbReference>
<dbReference type="EMBL" id="AAFC03096871">
    <property type="status" value="NOT_ANNOTATED_CDS"/>
    <property type="molecule type" value="Genomic_DNA"/>
</dbReference>
<dbReference type="EMBL" id="BC109527">
    <property type="protein sequence ID" value="AAI09528.1"/>
    <property type="status" value="ALT_SEQ"/>
    <property type="molecule type" value="mRNA"/>
</dbReference>
<dbReference type="RefSeq" id="NP_001071528.1">
    <property type="nucleotide sequence ID" value="NM_001078060.1"/>
</dbReference>
<dbReference type="SMR" id="C0LZJ1"/>
<dbReference type="FunCoup" id="C0LZJ1">
    <property type="interactions" value="236"/>
</dbReference>
<dbReference type="STRING" id="9913.ENSBTAP00000023667"/>
<dbReference type="PaxDb" id="9913-ENSBTAP00000023667"/>
<dbReference type="GeneID" id="616245"/>
<dbReference type="KEGG" id="bta:616245"/>
<dbReference type="CTD" id="1761"/>
<dbReference type="eggNOG" id="KOG3815">
    <property type="taxonomic scope" value="Eukaryota"/>
</dbReference>
<dbReference type="InParanoid" id="C0LZJ1"/>
<dbReference type="OrthoDB" id="9946337at2759"/>
<dbReference type="Proteomes" id="UP000009136">
    <property type="component" value="Unplaced"/>
</dbReference>
<dbReference type="GO" id="GO:0005634">
    <property type="term" value="C:nucleus"/>
    <property type="evidence" value="ECO:0000250"/>
    <property type="project" value="UniProtKB"/>
</dbReference>
<dbReference type="GO" id="GO:0000987">
    <property type="term" value="F:cis-regulatory region sequence-specific DNA binding"/>
    <property type="evidence" value="ECO:0000250"/>
    <property type="project" value="UniProtKB"/>
</dbReference>
<dbReference type="GO" id="GO:0000981">
    <property type="term" value="F:DNA-binding transcription factor activity, RNA polymerase II-specific"/>
    <property type="evidence" value="ECO:0000318"/>
    <property type="project" value="GO_Central"/>
</dbReference>
<dbReference type="GO" id="GO:0046872">
    <property type="term" value="F:metal ion binding"/>
    <property type="evidence" value="ECO:0007669"/>
    <property type="project" value="UniProtKB-KW"/>
</dbReference>
<dbReference type="GO" id="GO:0000978">
    <property type="term" value="F:RNA polymerase II cis-regulatory region sequence-specific DNA binding"/>
    <property type="evidence" value="ECO:0000318"/>
    <property type="project" value="GO_Central"/>
</dbReference>
<dbReference type="GO" id="GO:0002176">
    <property type="term" value="P:male germ cell proliferation"/>
    <property type="evidence" value="ECO:0000250"/>
    <property type="project" value="UniProtKB"/>
</dbReference>
<dbReference type="GO" id="GO:0030238">
    <property type="term" value="P:male sex determination"/>
    <property type="evidence" value="ECO:0000250"/>
    <property type="project" value="UniProtKB"/>
</dbReference>
<dbReference type="GO" id="GO:0046661">
    <property type="term" value="P:male sex differentiation"/>
    <property type="evidence" value="ECO:0000250"/>
    <property type="project" value="UniProtKB"/>
</dbReference>
<dbReference type="GO" id="GO:0045835">
    <property type="term" value="P:negative regulation of meiotic nuclear division"/>
    <property type="evidence" value="ECO:0000250"/>
    <property type="project" value="UniProtKB"/>
</dbReference>
<dbReference type="GO" id="GO:0000122">
    <property type="term" value="P:negative regulation of transcription by RNA polymerase II"/>
    <property type="evidence" value="ECO:0000250"/>
    <property type="project" value="UniProtKB"/>
</dbReference>
<dbReference type="GO" id="GO:0045840">
    <property type="term" value="P:positive regulation of mitotic nuclear division"/>
    <property type="evidence" value="ECO:0000250"/>
    <property type="project" value="UniProtKB"/>
</dbReference>
<dbReference type="GO" id="GO:0045944">
    <property type="term" value="P:positive regulation of transcription by RNA polymerase II"/>
    <property type="evidence" value="ECO:0000250"/>
    <property type="project" value="UniProtKB"/>
</dbReference>
<dbReference type="GO" id="GO:0006357">
    <property type="term" value="P:regulation of transcription by RNA polymerase II"/>
    <property type="evidence" value="ECO:0000318"/>
    <property type="project" value="GO_Central"/>
</dbReference>
<dbReference type="GO" id="GO:0060008">
    <property type="term" value="P:Sertoli cell differentiation"/>
    <property type="evidence" value="ECO:0000250"/>
    <property type="project" value="UniProtKB"/>
</dbReference>
<dbReference type="GO" id="GO:0007548">
    <property type="term" value="P:sex differentiation"/>
    <property type="evidence" value="ECO:0000318"/>
    <property type="project" value="GO_Central"/>
</dbReference>
<dbReference type="FunFam" id="4.10.1040.10:FF:000001">
    <property type="entry name" value="doublesex- and mab-3-related transcription factor 1"/>
    <property type="match status" value="1"/>
</dbReference>
<dbReference type="Gene3D" id="4.10.1040.10">
    <property type="entry name" value="DM DNA-binding domain"/>
    <property type="match status" value="1"/>
</dbReference>
<dbReference type="InterPro" id="IPR001275">
    <property type="entry name" value="DM_DNA-bd"/>
</dbReference>
<dbReference type="InterPro" id="IPR036407">
    <property type="entry name" value="DM_DNA-bd_sf"/>
</dbReference>
<dbReference type="InterPro" id="IPR026607">
    <property type="entry name" value="DMRT"/>
</dbReference>
<dbReference type="InterPro" id="IPR022114">
    <property type="entry name" value="DMRT1-like"/>
</dbReference>
<dbReference type="PANTHER" id="PTHR12322">
    <property type="entry name" value="DOUBLESEX AND MAB-3 RELATED TRANSCRIPTION FACTOR DMRT"/>
    <property type="match status" value="1"/>
</dbReference>
<dbReference type="PANTHER" id="PTHR12322:SF70">
    <property type="entry name" value="DOUBLESEX- AND MAB-3-RELATED TRANSCRIPTION FACTOR 1"/>
    <property type="match status" value="1"/>
</dbReference>
<dbReference type="Pfam" id="PF00751">
    <property type="entry name" value="DM"/>
    <property type="match status" value="1"/>
</dbReference>
<dbReference type="Pfam" id="PF12374">
    <property type="entry name" value="Dmrt1"/>
    <property type="match status" value="1"/>
</dbReference>
<dbReference type="SMART" id="SM00301">
    <property type="entry name" value="DM"/>
    <property type="match status" value="1"/>
</dbReference>
<dbReference type="SUPFAM" id="SSF82927">
    <property type="entry name" value="Cysteine-rich DNA binding domain, (DM domain)"/>
    <property type="match status" value="1"/>
</dbReference>
<dbReference type="PROSITE" id="PS40000">
    <property type="entry name" value="DM_1"/>
    <property type="match status" value="1"/>
</dbReference>
<dbReference type="PROSITE" id="PS50809">
    <property type="entry name" value="DM_2"/>
    <property type="match status" value="1"/>
</dbReference>
<reference key="1">
    <citation type="journal article" date="2009" name="Cytogenet. Genome Res.">
        <title>Comparative cytogenetic and molecular studies of DM domain genes in pig and cattle.</title>
        <authorList>
            <person name="Bratus A."/>
            <person name="Slota E."/>
        </authorList>
    </citation>
    <scope>NUCLEOTIDE SEQUENCE [MRNA]</scope>
</reference>
<reference key="2">
    <citation type="journal article" date="2009" name="Genome Biol.">
        <title>A whole-genome assembly of the domestic cow, Bos taurus.</title>
        <authorList>
            <person name="Zimin A.V."/>
            <person name="Delcher A.L."/>
            <person name="Florea L."/>
            <person name="Kelley D.R."/>
            <person name="Schatz M.C."/>
            <person name="Puiu D."/>
            <person name="Hanrahan F."/>
            <person name="Pertea G."/>
            <person name="Van Tassell C.P."/>
            <person name="Sonstegard T.S."/>
            <person name="Marcais G."/>
            <person name="Roberts M."/>
            <person name="Subramanian P."/>
            <person name="Yorke J.A."/>
            <person name="Salzberg S.L."/>
        </authorList>
    </citation>
    <scope>NUCLEOTIDE SEQUENCE [LARGE SCALE GENOMIC DNA]</scope>
    <source>
        <strain>Hereford</strain>
    </source>
</reference>
<reference key="3">
    <citation type="journal article" date="2009" name="Science">
        <title>The genome sequence of taurine cattle: a window to ruminant biology and evolution.</title>
        <authorList>
            <consortium name="The bovine genome sequencing and analysis consortium"/>
        </authorList>
    </citation>
    <scope>NUCLEOTIDE SEQUENCE [LARGE SCALE GENOMIC DNA]</scope>
    <source>
        <strain>Hereford</strain>
    </source>
</reference>
<reference key="4">
    <citation type="submission" date="2005-11" db="EMBL/GenBank/DDBJ databases">
        <authorList>
            <consortium name="NIH - Mammalian Gene Collection (MGC) project"/>
        </authorList>
    </citation>
    <scope>NUCLEOTIDE SEQUENCE [LARGE SCALE MRNA]</scope>
    <source>
        <strain>Crossbred X Angus</strain>
        <tissue>Liver</tissue>
    </source>
</reference>
<sequence>MPNDDAYSKPSAPSEAPQTPGAPPQGKAGGGGGGSGSDSGASGTGAVSGKKSPRLPKCARCRNHGYASPLKGHKRFCMWRDCQCKKCNLIAERQRVMAAQVALRRQQAQEEELGISHPIPLPSTAELMVKRENSSGNPCLMIESSSSSQPPPASTPSTAAPGPEGRMVIQDIPAVTSRGHVENTPDLVSDSTYYSSFYQPSLFPYYNNLYNYPQYPMALAADSSSGDVGNPLGGSPVKNSLRSLPAPYVPGQTGNQWQMKNSENRHAVSSQYRMHSYYPPPSYLGQSMSQIFTFEDSASYSEAKASAFSPPSSQDSGLVSLPSSSPIGNESTKAVLDCESASEPSNFAVAPIIEEDE</sequence>
<protein>
    <recommendedName>
        <fullName>Doublesex and mab-3 related transcription factor 1</fullName>
    </recommendedName>
</protein>
<comment type="function">
    <text evidence="1">Transcription factor that plays a key role in male sex determination and differentiation by controlling testis development and male germ cell proliferation. Plays a central role in spermatogonia by inhibiting meiosis in undifferentiated spermatogonia and promoting mitosis, leading to spermatogonial development and allowing abundant and continuous production of sperm. Acts both as a transcription repressor and activator: prevents meiosis by restricting retinoic acid (RA)-dependent transcription and repressing STRA8 expression and promotes spermatogonial development by activating spermatogonial differentiation genes, such as SOHLH1. Also plays a key role in postnatal sex maintenance by maintaining testis determination and preventing feminization: represses transcription of female promoting genes such as FOXL2 and activates male-specific genes. May act as a tumor suppressor. May also play a minor role in oogenesis (By similarity).</text>
</comment>
<comment type="subcellular location">
    <subcellularLocation>
        <location evidence="3">Nucleus</location>
    </subcellularLocation>
</comment>
<comment type="similarity">
    <text evidence="5">Belongs to the DMRT family.</text>
</comment>
<comment type="sequence caution" evidence="5">
    <conflict type="erroneous termination">
        <sequence resource="EMBL-CDS" id="AAI09528"/>
    </conflict>
    <text>Truncated C-terminus.</text>
</comment>
<keyword id="KW-0010">Activator</keyword>
<keyword id="KW-0217">Developmental protein</keyword>
<keyword id="KW-0221">Differentiation</keyword>
<keyword id="KW-0238">DNA-binding</keyword>
<keyword id="KW-0479">Metal-binding</keyword>
<keyword id="KW-0539">Nucleus</keyword>
<keyword id="KW-0597">Phosphoprotein</keyword>
<keyword id="KW-1185">Reference proteome</keyword>
<keyword id="KW-0678">Repressor</keyword>
<keyword id="KW-0726">Sexual differentiation</keyword>
<keyword id="KW-0804">Transcription</keyword>
<keyword id="KW-0805">Transcription regulation</keyword>
<keyword id="KW-0043">Tumor suppressor</keyword>
<keyword id="KW-0862">Zinc</keyword>
<accession>C0LZJ1</accession>
<accession>F1MYB6</accession>
<accession>Q32LL0</accession>
<feature type="chain" id="PRO_0000416898" description="Doublesex and mab-3 related transcription factor 1">
    <location>
        <begin position="1"/>
        <end position="357"/>
    </location>
</feature>
<feature type="DNA-binding region" description="DM" evidence="3">
    <location>
        <begin position="58"/>
        <end position="105"/>
    </location>
</feature>
<feature type="region of interest" description="Disordered" evidence="4">
    <location>
        <begin position="1"/>
        <end position="54"/>
    </location>
</feature>
<feature type="region of interest" description="Disordered" evidence="4">
    <location>
        <begin position="138"/>
        <end position="164"/>
    </location>
</feature>
<feature type="region of interest" description="Disordered" evidence="4">
    <location>
        <begin position="305"/>
        <end position="340"/>
    </location>
</feature>
<feature type="compositionally biased region" description="Gly residues" evidence="4">
    <location>
        <begin position="27"/>
        <end position="37"/>
    </location>
</feature>
<feature type="compositionally biased region" description="Low complexity" evidence="4">
    <location>
        <begin position="38"/>
        <end position="50"/>
    </location>
</feature>
<feature type="compositionally biased region" description="Polar residues" evidence="4">
    <location>
        <begin position="309"/>
        <end position="332"/>
    </location>
</feature>
<feature type="modified residue" description="Phosphoserine" evidence="2">
    <location>
        <position position="323"/>
    </location>
</feature>
<feature type="sequence conflict" description="In Ref. 1; ACN86339 and 4; AAI09528." evidence="5" ref="1 4">
    <original>A</original>
    <variation>V</variation>
    <location>
        <position position="307"/>
    </location>
</feature>
<organism>
    <name type="scientific">Bos taurus</name>
    <name type="common">Bovine</name>
    <dbReference type="NCBI Taxonomy" id="9913"/>
    <lineage>
        <taxon>Eukaryota</taxon>
        <taxon>Metazoa</taxon>
        <taxon>Chordata</taxon>
        <taxon>Craniata</taxon>
        <taxon>Vertebrata</taxon>
        <taxon>Euteleostomi</taxon>
        <taxon>Mammalia</taxon>
        <taxon>Eutheria</taxon>
        <taxon>Laurasiatheria</taxon>
        <taxon>Artiodactyla</taxon>
        <taxon>Ruminantia</taxon>
        <taxon>Pecora</taxon>
        <taxon>Bovidae</taxon>
        <taxon>Bovinae</taxon>
        <taxon>Bos</taxon>
    </lineage>
</organism>
<name>DMRT1_BOVIN</name>